<keyword id="KW-0687">Ribonucleoprotein</keyword>
<keyword id="KW-0689">Ribosomal protein</keyword>
<keyword id="KW-0694">RNA-binding</keyword>
<keyword id="KW-0699">rRNA-binding</keyword>
<gene>
    <name evidence="1" type="primary">rpsC</name>
    <name type="ordered locus">Bcep1808_0336</name>
</gene>
<accession>A4JAP6</accession>
<protein>
    <recommendedName>
        <fullName evidence="1">Small ribosomal subunit protein uS3</fullName>
    </recommendedName>
    <alternativeName>
        <fullName evidence="3">30S ribosomal protein S3</fullName>
    </alternativeName>
</protein>
<evidence type="ECO:0000255" key="1">
    <source>
        <dbReference type="HAMAP-Rule" id="MF_01309"/>
    </source>
</evidence>
<evidence type="ECO:0000256" key="2">
    <source>
        <dbReference type="SAM" id="MobiDB-lite"/>
    </source>
</evidence>
<evidence type="ECO:0000305" key="3"/>
<organism>
    <name type="scientific">Burkholderia vietnamiensis (strain G4 / LMG 22486)</name>
    <name type="common">Burkholderia cepacia (strain R1808)</name>
    <dbReference type="NCBI Taxonomy" id="269482"/>
    <lineage>
        <taxon>Bacteria</taxon>
        <taxon>Pseudomonadati</taxon>
        <taxon>Pseudomonadota</taxon>
        <taxon>Betaproteobacteria</taxon>
        <taxon>Burkholderiales</taxon>
        <taxon>Burkholderiaceae</taxon>
        <taxon>Burkholderia</taxon>
        <taxon>Burkholderia cepacia complex</taxon>
    </lineage>
</organism>
<dbReference type="EMBL" id="CP000614">
    <property type="protein sequence ID" value="ABO53349.1"/>
    <property type="molecule type" value="Genomic_DNA"/>
</dbReference>
<dbReference type="SMR" id="A4JAP6"/>
<dbReference type="KEGG" id="bvi:Bcep1808_0336"/>
<dbReference type="eggNOG" id="COG0092">
    <property type="taxonomic scope" value="Bacteria"/>
</dbReference>
<dbReference type="HOGENOM" id="CLU_058591_0_2_4"/>
<dbReference type="Proteomes" id="UP000002287">
    <property type="component" value="Chromosome 1"/>
</dbReference>
<dbReference type="GO" id="GO:0022627">
    <property type="term" value="C:cytosolic small ribosomal subunit"/>
    <property type="evidence" value="ECO:0007669"/>
    <property type="project" value="TreeGrafter"/>
</dbReference>
<dbReference type="GO" id="GO:0003729">
    <property type="term" value="F:mRNA binding"/>
    <property type="evidence" value="ECO:0007669"/>
    <property type="project" value="UniProtKB-UniRule"/>
</dbReference>
<dbReference type="GO" id="GO:0019843">
    <property type="term" value="F:rRNA binding"/>
    <property type="evidence" value="ECO:0007669"/>
    <property type="project" value="UniProtKB-UniRule"/>
</dbReference>
<dbReference type="GO" id="GO:0003735">
    <property type="term" value="F:structural constituent of ribosome"/>
    <property type="evidence" value="ECO:0007669"/>
    <property type="project" value="InterPro"/>
</dbReference>
<dbReference type="GO" id="GO:0006412">
    <property type="term" value="P:translation"/>
    <property type="evidence" value="ECO:0007669"/>
    <property type="project" value="UniProtKB-UniRule"/>
</dbReference>
<dbReference type="CDD" id="cd02412">
    <property type="entry name" value="KH-II_30S_S3"/>
    <property type="match status" value="1"/>
</dbReference>
<dbReference type="FunFam" id="3.30.1140.32:FF:000006">
    <property type="entry name" value="30S ribosomal protein S3"/>
    <property type="match status" value="1"/>
</dbReference>
<dbReference type="FunFam" id="3.30.300.20:FF:000001">
    <property type="entry name" value="30S ribosomal protein S3"/>
    <property type="match status" value="1"/>
</dbReference>
<dbReference type="Gene3D" id="3.30.300.20">
    <property type="match status" value="1"/>
</dbReference>
<dbReference type="Gene3D" id="3.30.1140.32">
    <property type="entry name" value="Ribosomal protein S3, C-terminal domain"/>
    <property type="match status" value="1"/>
</dbReference>
<dbReference type="HAMAP" id="MF_01309_B">
    <property type="entry name" value="Ribosomal_uS3_B"/>
    <property type="match status" value="1"/>
</dbReference>
<dbReference type="InterPro" id="IPR004087">
    <property type="entry name" value="KH_dom"/>
</dbReference>
<dbReference type="InterPro" id="IPR015946">
    <property type="entry name" value="KH_dom-like_a/b"/>
</dbReference>
<dbReference type="InterPro" id="IPR004044">
    <property type="entry name" value="KH_dom_type_2"/>
</dbReference>
<dbReference type="InterPro" id="IPR009019">
    <property type="entry name" value="KH_sf_prok-type"/>
</dbReference>
<dbReference type="InterPro" id="IPR036419">
    <property type="entry name" value="Ribosomal_S3_C_sf"/>
</dbReference>
<dbReference type="InterPro" id="IPR005704">
    <property type="entry name" value="Ribosomal_uS3_bac-typ"/>
</dbReference>
<dbReference type="InterPro" id="IPR001351">
    <property type="entry name" value="Ribosomal_uS3_C"/>
</dbReference>
<dbReference type="InterPro" id="IPR018280">
    <property type="entry name" value="Ribosomal_uS3_CS"/>
</dbReference>
<dbReference type="NCBIfam" id="TIGR01009">
    <property type="entry name" value="rpsC_bact"/>
    <property type="match status" value="1"/>
</dbReference>
<dbReference type="PANTHER" id="PTHR11760">
    <property type="entry name" value="30S/40S RIBOSOMAL PROTEIN S3"/>
    <property type="match status" value="1"/>
</dbReference>
<dbReference type="PANTHER" id="PTHR11760:SF19">
    <property type="entry name" value="SMALL RIBOSOMAL SUBUNIT PROTEIN US3C"/>
    <property type="match status" value="1"/>
</dbReference>
<dbReference type="Pfam" id="PF07650">
    <property type="entry name" value="KH_2"/>
    <property type="match status" value="1"/>
</dbReference>
<dbReference type="Pfam" id="PF00189">
    <property type="entry name" value="Ribosomal_S3_C"/>
    <property type="match status" value="1"/>
</dbReference>
<dbReference type="SMART" id="SM00322">
    <property type="entry name" value="KH"/>
    <property type="match status" value="1"/>
</dbReference>
<dbReference type="SUPFAM" id="SSF54814">
    <property type="entry name" value="Prokaryotic type KH domain (KH-domain type II)"/>
    <property type="match status" value="1"/>
</dbReference>
<dbReference type="SUPFAM" id="SSF54821">
    <property type="entry name" value="Ribosomal protein S3 C-terminal domain"/>
    <property type="match status" value="1"/>
</dbReference>
<dbReference type="PROSITE" id="PS50823">
    <property type="entry name" value="KH_TYPE_2"/>
    <property type="match status" value="1"/>
</dbReference>
<dbReference type="PROSITE" id="PS00548">
    <property type="entry name" value="RIBOSOMAL_S3"/>
    <property type="match status" value="1"/>
</dbReference>
<feature type="chain" id="PRO_1000086100" description="Small ribosomal subunit protein uS3">
    <location>
        <begin position="1"/>
        <end position="266"/>
    </location>
</feature>
<feature type="domain" description="KH type-2" evidence="1">
    <location>
        <begin position="39"/>
        <end position="107"/>
    </location>
</feature>
<feature type="region of interest" description="Disordered" evidence="2">
    <location>
        <begin position="218"/>
        <end position="266"/>
    </location>
</feature>
<feature type="compositionally biased region" description="Basic and acidic residues" evidence="2">
    <location>
        <begin position="230"/>
        <end position="241"/>
    </location>
</feature>
<feature type="compositionally biased region" description="Basic and acidic residues" evidence="2">
    <location>
        <begin position="257"/>
        <end position="266"/>
    </location>
</feature>
<sequence>MGQKIHPTGFRLAVSRNWASRWYANNNNFAAMLQEDIGVREYLKKKLKNASVGRVVIERPAKNARITIYSSRPGVVIGKKGEDIEQLKTELQRRMGVPVHVNIEEIRKPETDAQLIADSITQQLERRIMFRRAMKRAMQNAMRLGAQGIKIMSAGRLNGIEIARTEWYREGRVPLHTLRADIDYATSEAKTTYGIIGVKVWVYKGDTLGRNDAPVVEEVAEDKRPRRNARPGDRRPRRDGEGGAPGARRGAPRRGAGKPEDGKTGE</sequence>
<proteinExistence type="inferred from homology"/>
<reference key="1">
    <citation type="submission" date="2007-03" db="EMBL/GenBank/DDBJ databases">
        <title>Complete sequence of chromosome 1 of Burkholderia vietnamiensis G4.</title>
        <authorList>
            <consortium name="US DOE Joint Genome Institute"/>
            <person name="Copeland A."/>
            <person name="Lucas S."/>
            <person name="Lapidus A."/>
            <person name="Barry K."/>
            <person name="Detter J.C."/>
            <person name="Glavina del Rio T."/>
            <person name="Hammon N."/>
            <person name="Israni S."/>
            <person name="Dalin E."/>
            <person name="Tice H."/>
            <person name="Pitluck S."/>
            <person name="Chain P."/>
            <person name="Malfatti S."/>
            <person name="Shin M."/>
            <person name="Vergez L."/>
            <person name="Schmutz J."/>
            <person name="Larimer F."/>
            <person name="Land M."/>
            <person name="Hauser L."/>
            <person name="Kyrpides N."/>
            <person name="Tiedje J."/>
            <person name="Richardson P."/>
        </authorList>
    </citation>
    <scope>NUCLEOTIDE SEQUENCE [LARGE SCALE GENOMIC DNA]</scope>
    <source>
        <strain>G4 / LMG 22486</strain>
    </source>
</reference>
<name>RS3_BURVG</name>
<comment type="function">
    <text evidence="1">Binds the lower part of the 30S subunit head. Binds mRNA in the 70S ribosome, positioning it for translation.</text>
</comment>
<comment type="subunit">
    <text evidence="1">Part of the 30S ribosomal subunit. Forms a tight complex with proteins S10 and S14.</text>
</comment>
<comment type="similarity">
    <text evidence="1">Belongs to the universal ribosomal protein uS3 family.</text>
</comment>